<reference key="1">
    <citation type="journal article" date="2004" name="Proc. Natl. Acad. Sci. U.S.A.">
        <title>Prion protein gene (PRNP) variants and evidence for strong purifying selection in functionally important regions of bovine exon 3.</title>
        <authorList>
            <person name="Seabury C.M."/>
            <person name="Honeycutt R.L."/>
            <person name="Rooney A.P."/>
            <person name="Halbert N.D."/>
            <person name="Derr J.N."/>
        </authorList>
    </citation>
    <scope>NUCLEOTIDE SEQUENCE [GENOMIC DNA]</scope>
    <source>
        <strain>Isolate Z19-1</strain>
        <strain>Isolate Z19-2</strain>
    </source>
</reference>
<sequence length="264" mass="28664">MVKSHIGSWILVLFVAMWSDVGLCKKRPKPGGGWNTGGSRYPGQGSPGGNRYPPQGGGSWGQPHGGGWGQPHGGSWGQPHGGGWGQPHGGGWGQPHGGGGWGQGGTHGQWNKPSKPKTNMKHVAGAAAAGAVVGGLGGYMLGSAMNRPLIHFGNDYEDRYYRENMHRYPNQVYYRPVDQYSNQNNFVRDCVNITVKEHTVTTTTKGENFTETDIKMMERVVEQMCITQYQTESQAYYQRGASVVLFSSPPVVLLISFLIFLIVG</sequence>
<feature type="signal peptide" evidence="1">
    <location>
        <begin position="1"/>
        <end position="24"/>
    </location>
</feature>
<feature type="chain" id="PRO_0000025625" description="Major prion protein">
    <location>
        <begin position="25"/>
        <end position="241"/>
    </location>
</feature>
<feature type="propeptide" id="PRO_0000025626" description="Removed in mature form" evidence="5">
    <location>
        <begin position="242"/>
        <end position="264"/>
    </location>
</feature>
<feature type="repeat" description="1">
    <location>
        <begin position="54"/>
        <end position="62"/>
    </location>
</feature>
<feature type="repeat" description="2">
    <location>
        <begin position="63"/>
        <end position="70"/>
    </location>
</feature>
<feature type="repeat" description="3">
    <location>
        <begin position="71"/>
        <end position="78"/>
    </location>
</feature>
<feature type="repeat" description="4">
    <location>
        <begin position="79"/>
        <end position="86"/>
    </location>
</feature>
<feature type="repeat" description="5">
    <location>
        <begin position="87"/>
        <end position="94"/>
    </location>
</feature>
<feature type="repeat" description="6">
    <location>
        <begin position="95"/>
        <end position="103"/>
    </location>
</feature>
<feature type="region of interest" description="Interaction with GRB2, ERI3 and SYN1" evidence="4">
    <location>
        <begin position="25"/>
        <end position="241"/>
    </location>
</feature>
<feature type="region of interest" description="Disordered" evidence="6">
    <location>
        <begin position="28"/>
        <end position="118"/>
    </location>
</feature>
<feature type="region of interest" description="6 X 8 AA tandem repeats of P-H-G-G-G-W-G-Q">
    <location>
        <begin position="54"/>
        <end position="103"/>
    </location>
</feature>
<feature type="compositionally biased region" description="Gly residues" evidence="6">
    <location>
        <begin position="55"/>
        <end position="107"/>
    </location>
</feature>
<feature type="binding site" evidence="2">
    <location>
        <position position="72"/>
    </location>
    <ligand>
        <name>Cu(2+)</name>
        <dbReference type="ChEBI" id="CHEBI:29036"/>
        <label>1</label>
    </ligand>
</feature>
<feature type="binding site" evidence="2">
    <location>
        <position position="73"/>
    </location>
    <ligand>
        <name>Cu(2+)</name>
        <dbReference type="ChEBI" id="CHEBI:29036"/>
        <label>1</label>
    </ligand>
</feature>
<feature type="binding site" evidence="2">
    <location>
        <position position="74"/>
    </location>
    <ligand>
        <name>Cu(2+)</name>
        <dbReference type="ChEBI" id="CHEBI:29036"/>
        <label>1</label>
    </ligand>
</feature>
<feature type="binding site" evidence="2">
    <location>
        <position position="80"/>
    </location>
    <ligand>
        <name>Cu(2+)</name>
        <dbReference type="ChEBI" id="CHEBI:29036"/>
        <label>2</label>
    </ligand>
</feature>
<feature type="binding site" evidence="2">
    <location>
        <position position="81"/>
    </location>
    <ligand>
        <name>Cu(2+)</name>
        <dbReference type="ChEBI" id="CHEBI:29036"/>
        <label>2</label>
    </ligand>
</feature>
<feature type="binding site" evidence="2">
    <location>
        <position position="82"/>
    </location>
    <ligand>
        <name>Cu(2+)</name>
        <dbReference type="ChEBI" id="CHEBI:29036"/>
        <label>2</label>
    </ligand>
</feature>
<feature type="binding site" evidence="2">
    <location>
        <position position="88"/>
    </location>
    <ligand>
        <name>Cu(2+)</name>
        <dbReference type="ChEBI" id="CHEBI:29036"/>
        <label>3</label>
    </ligand>
</feature>
<feature type="binding site" evidence="2">
    <location>
        <position position="89"/>
    </location>
    <ligand>
        <name>Cu(2+)</name>
        <dbReference type="ChEBI" id="CHEBI:29036"/>
        <label>3</label>
    </ligand>
</feature>
<feature type="binding site" evidence="2">
    <location>
        <position position="90"/>
    </location>
    <ligand>
        <name>Cu(2+)</name>
        <dbReference type="ChEBI" id="CHEBI:29036"/>
        <label>3</label>
    </ligand>
</feature>
<feature type="binding site" evidence="2">
    <location>
        <position position="96"/>
    </location>
    <ligand>
        <name>Cu(2+)</name>
        <dbReference type="ChEBI" id="CHEBI:29036"/>
        <label>4</label>
    </ligand>
</feature>
<feature type="binding site" evidence="2">
    <location>
        <position position="98"/>
    </location>
    <ligand>
        <name>Cu(2+)</name>
        <dbReference type="ChEBI" id="CHEBI:29036"/>
        <label>4</label>
    </ligand>
</feature>
<feature type="binding site" evidence="2">
    <location>
        <position position="99"/>
    </location>
    <ligand>
        <name>Cu(2+)</name>
        <dbReference type="ChEBI" id="CHEBI:29036"/>
        <label>4</label>
    </ligand>
</feature>
<feature type="lipid moiety-binding region" description="GPI-anchor amidated alanine" evidence="5">
    <location>
        <position position="241"/>
    </location>
</feature>
<feature type="glycosylation site" description="N-linked (GlcNAc...) asparagine" evidence="5">
    <location>
        <position position="192"/>
    </location>
</feature>
<feature type="glycosylation site" description="N-linked (GlcNAc...) asparagine" evidence="5">
    <location>
        <position position="208"/>
    </location>
</feature>
<feature type="disulfide bond" evidence="3">
    <location>
        <begin position="190"/>
        <end position="225"/>
    </location>
</feature>
<gene>
    <name type="primary">PRNP</name>
    <name type="synonym">PRP</name>
</gene>
<accession>Q5UJG7</accession>
<keyword id="KW-0034">Amyloid</keyword>
<keyword id="KW-1003">Cell membrane</keyword>
<keyword id="KW-0186">Copper</keyword>
<keyword id="KW-1015">Disulfide bond</keyword>
<keyword id="KW-0325">Glycoprotein</keyword>
<keyword id="KW-0333">Golgi apparatus</keyword>
<keyword id="KW-0336">GPI-anchor</keyword>
<keyword id="KW-0449">Lipoprotein</keyword>
<keyword id="KW-0472">Membrane</keyword>
<keyword id="KW-0479">Metal-binding</keyword>
<keyword id="KW-0640">Prion</keyword>
<keyword id="KW-0677">Repeat</keyword>
<keyword id="KW-0732">Signal</keyword>
<keyword id="KW-0862">Zinc</keyword>
<comment type="function">
    <text evidence="2 4">Its primary physiological function is unclear. Has cytoprotective activity against internal or environmental stresses. May play a role in neuronal development and synaptic plasticity. May be required for neuronal myelin sheath maintenance. May play a role in iron uptake and iron homeostasis. Soluble oligomers are toxic to cultured neuroblastoma cells and induce apoptosis (in vitro). Association with GPC1 (via its heparan sulfate chains) targets PRNP to lipid rafts. Also provides Cu(2+) or Zn(2+) for the ascorbate-mediated GPC1 deaminase degradation of its heparan sulfate side chains (By similarity).</text>
</comment>
<comment type="subunit">
    <text evidence="2 4">Monomer and homodimer. Has a tendency to aggregate into amyloid fibrils containing a cross-beta spine, formed by a steric zipper of superposed beta-strands. Soluble oligomers may represent an intermediate stage on the path to fibril formation. Copper binding may promote oligomerization. Interacts with GRB2, APP, ERI3/PRNPIP and SYN1. Mislocalized cytosolically exposed PrP interacts with MGRN1; this interaction alters MGRN1 subcellular location and causes lysosomal enlargement. Interacts with KIAA1191.</text>
</comment>
<comment type="subcellular location">
    <subcellularLocation>
        <location evidence="2">Cell membrane</location>
        <topology evidence="2">Lipid-anchor</topology>
        <topology evidence="2">GPI-anchor</topology>
    </subcellularLocation>
    <subcellularLocation>
        <location evidence="4">Golgi apparatus</location>
    </subcellularLocation>
    <text evidence="2">Targeted to lipid rafts via association with the heparan sulfate chains of GPC1. Colocates, in the presence of Cu(2+), to vesicles in para- and perinuclear regions, where both proteins undergo internalization. Heparin displaces PRNP from lipid rafts and promotes endocytosis.</text>
</comment>
<comment type="domain">
    <text evidence="2">The normal, monomeric form has a mainly alpha-helical structure. The disease-associated, protease-resistant form forms amyloid fibrils containing a cross-beta spine, formed by a steric zipper of superposed beta-strands. Disease mutations may favor intermolecular contacts via short beta strands, and may thereby trigger oligomerization.</text>
</comment>
<comment type="domain">
    <text evidence="2">Contains an N-terminal region composed of octamer repeats. At low copper concentrations, the sidechains of His residues from three or four repeats contribute to the binding of a single copper ion. Alternatively, a copper ion can be bound by interaction with the sidechain and backbone amide nitrogen of a single His residue. The observed copper binding stoichiometry suggests that two repeat regions cooperate to stabilize the binding of a single copper ion. At higher copper concentrations, each octamer can bind one copper ion by interactions with the His sidechain and Gly backbone atoms. A mixture of binding types may occur, especially in the case of octamer repeat expansion. Copper binding may stabilize the conformation of this region and may promote oligomerization.</text>
</comment>
<comment type="disease">
    <text evidence="7">Variations in PRNP are responsible of transmissible bovine spongiform encephalopathies (BSE), a class of neurodegenerative diseases that affect various mammals. These diseases are caused by abnormally folded prion proteins. BSE can be subdivided into at least three groups: classical, H-type and L-type, with the latter 2 collectively referred to as atypical BSE. Susceptibility or resistance to a BSE disease can be influenced by at least 3 factors related to the host prion protein: protein expression levels, number of octapeptide repeats, and specific polymorphisms. In cattle, as in humans, BSEs can occur as infectious, spontaneous and genetic diseases.</text>
</comment>
<comment type="similarity">
    <text evidence="7">Belongs to the prion family.</text>
</comment>
<dbReference type="EMBL" id="AY720699">
    <property type="protein sequence ID" value="AAV30506.1"/>
    <property type="molecule type" value="Genomic_DNA"/>
</dbReference>
<dbReference type="EMBL" id="AY720700">
    <property type="protein sequence ID" value="AAV30507.1"/>
    <property type="molecule type" value="Genomic_DNA"/>
</dbReference>
<dbReference type="SMR" id="Q5UJG7"/>
<dbReference type="GlyCosmos" id="Q5UJG7">
    <property type="glycosylation" value="2 sites, No reported glycans"/>
</dbReference>
<dbReference type="GO" id="GO:0005794">
    <property type="term" value="C:Golgi apparatus"/>
    <property type="evidence" value="ECO:0007669"/>
    <property type="project" value="UniProtKB-SubCell"/>
</dbReference>
<dbReference type="GO" id="GO:0005886">
    <property type="term" value="C:plasma membrane"/>
    <property type="evidence" value="ECO:0007669"/>
    <property type="project" value="UniProtKB-SubCell"/>
</dbReference>
<dbReference type="GO" id="GO:0098552">
    <property type="term" value="C:side of membrane"/>
    <property type="evidence" value="ECO:0007669"/>
    <property type="project" value="UniProtKB-KW"/>
</dbReference>
<dbReference type="GO" id="GO:0005507">
    <property type="term" value="F:copper ion binding"/>
    <property type="evidence" value="ECO:0000250"/>
    <property type="project" value="UniProtKB"/>
</dbReference>
<dbReference type="GO" id="GO:0051260">
    <property type="term" value="P:protein homooligomerization"/>
    <property type="evidence" value="ECO:0007669"/>
    <property type="project" value="InterPro"/>
</dbReference>
<dbReference type="FunFam" id="1.10.790.10:FF:000001">
    <property type="entry name" value="Major prion protein"/>
    <property type="match status" value="1"/>
</dbReference>
<dbReference type="Gene3D" id="1.10.790.10">
    <property type="entry name" value="Prion/Doppel protein, beta-ribbon domain"/>
    <property type="match status" value="1"/>
</dbReference>
<dbReference type="InterPro" id="IPR000817">
    <property type="entry name" value="Prion"/>
</dbReference>
<dbReference type="InterPro" id="IPR036924">
    <property type="entry name" value="Prion/Doppel_b-ribbon_dom_sf"/>
</dbReference>
<dbReference type="InterPro" id="IPR022416">
    <property type="entry name" value="Prion/Doppel_prot_b-ribbon_dom"/>
</dbReference>
<dbReference type="InterPro" id="IPR020949">
    <property type="entry name" value="Prion_copper_b_octapeptide"/>
</dbReference>
<dbReference type="InterPro" id="IPR025860">
    <property type="entry name" value="Prion_N"/>
</dbReference>
<dbReference type="PANTHER" id="PTHR15506">
    <property type="entry name" value="DOPPEL PRION"/>
    <property type="match status" value="1"/>
</dbReference>
<dbReference type="PANTHER" id="PTHR15506:SF2">
    <property type="entry name" value="MAJOR PRION PROTEIN"/>
    <property type="match status" value="1"/>
</dbReference>
<dbReference type="Pfam" id="PF00377">
    <property type="entry name" value="Prion"/>
    <property type="match status" value="1"/>
</dbReference>
<dbReference type="Pfam" id="PF11587">
    <property type="entry name" value="Prion_bPrPp"/>
    <property type="match status" value="1"/>
</dbReference>
<dbReference type="Pfam" id="PF03991">
    <property type="entry name" value="Prion_octapep"/>
    <property type="match status" value="1"/>
</dbReference>
<dbReference type="PRINTS" id="PR00341">
    <property type="entry name" value="PRION"/>
</dbReference>
<dbReference type="SMART" id="SM00157">
    <property type="entry name" value="PRP"/>
    <property type="match status" value="1"/>
</dbReference>
<dbReference type="SUPFAM" id="SSF54098">
    <property type="entry name" value="Prion-like"/>
    <property type="match status" value="1"/>
</dbReference>
<dbReference type="PROSITE" id="PS00291">
    <property type="entry name" value="PRION_1"/>
    <property type="match status" value="1"/>
</dbReference>
<dbReference type="PROSITE" id="PS00706">
    <property type="entry name" value="PRION_2"/>
    <property type="match status" value="1"/>
</dbReference>
<organism>
    <name type="scientific">Boselaphus tragocamelus</name>
    <name type="common">Nilgai</name>
    <dbReference type="NCBI Taxonomy" id="9917"/>
    <lineage>
        <taxon>Eukaryota</taxon>
        <taxon>Metazoa</taxon>
        <taxon>Chordata</taxon>
        <taxon>Craniata</taxon>
        <taxon>Vertebrata</taxon>
        <taxon>Euteleostomi</taxon>
        <taxon>Mammalia</taxon>
        <taxon>Eutheria</taxon>
        <taxon>Laurasiatheria</taxon>
        <taxon>Artiodactyla</taxon>
        <taxon>Ruminantia</taxon>
        <taxon>Pecora</taxon>
        <taxon>Bovidae</taxon>
        <taxon>Bovinae</taxon>
        <taxon>Boselaphus</taxon>
    </lineage>
</organism>
<proteinExistence type="inferred from homology"/>
<protein>
    <recommendedName>
        <fullName>Major prion protein</fullName>
        <shortName>PrP</shortName>
    </recommendedName>
    <cdAntigenName>CD230</cdAntigenName>
</protein>
<evidence type="ECO:0000250" key="1"/>
<evidence type="ECO:0000250" key="2">
    <source>
        <dbReference type="UniProtKB" id="P04156"/>
    </source>
</evidence>
<evidence type="ECO:0000250" key="3">
    <source>
        <dbReference type="UniProtKB" id="P04273"/>
    </source>
</evidence>
<evidence type="ECO:0000250" key="4">
    <source>
        <dbReference type="UniProtKB" id="P04925"/>
    </source>
</evidence>
<evidence type="ECO:0000255" key="5"/>
<evidence type="ECO:0000256" key="6">
    <source>
        <dbReference type="SAM" id="MobiDB-lite"/>
    </source>
</evidence>
<evidence type="ECO:0000305" key="7"/>
<name>PRIO_BOSTR</name>